<evidence type="ECO:0000255" key="1"/>
<evidence type="ECO:0000256" key="2">
    <source>
        <dbReference type="SAM" id="MobiDB-lite"/>
    </source>
</evidence>
<evidence type="ECO:0000269" key="3">
    <source>
    </source>
</evidence>
<evidence type="ECO:0000305" key="4"/>
<feature type="chain" id="PRO_0000116683" description="Uncharacterized membrane protein C14C4.07">
    <location>
        <begin position="1"/>
        <end position="644"/>
    </location>
</feature>
<feature type="transmembrane region" description="Helical" evidence="1">
    <location>
        <begin position="131"/>
        <end position="151"/>
    </location>
</feature>
<feature type="transmembrane region" description="Helical" evidence="1">
    <location>
        <begin position="190"/>
        <end position="210"/>
    </location>
</feature>
<feature type="transmembrane region" description="Helical" evidence="1">
    <location>
        <begin position="218"/>
        <end position="238"/>
    </location>
</feature>
<feature type="transmembrane region" description="Helical" evidence="1">
    <location>
        <begin position="245"/>
        <end position="265"/>
    </location>
</feature>
<feature type="transmembrane region" description="Helical" evidence="1">
    <location>
        <begin position="286"/>
        <end position="306"/>
    </location>
</feature>
<feature type="transmembrane region" description="Helical" evidence="1">
    <location>
        <begin position="314"/>
        <end position="334"/>
    </location>
</feature>
<feature type="transmembrane region" description="Helical" evidence="1">
    <location>
        <begin position="398"/>
        <end position="418"/>
    </location>
</feature>
<feature type="transmembrane region" description="Helical" evidence="1">
    <location>
        <begin position="435"/>
        <end position="455"/>
    </location>
</feature>
<feature type="transmembrane region" description="Helical" evidence="1">
    <location>
        <begin position="522"/>
        <end position="542"/>
    </location>
</feature>
<feature type="transmembrane region" description="Helical" evidence="1">
    <location>
        <begin position="546"/>
        <end position="566"/>
    </location>
</feature>
<feature type="transmembrane region" description="Helical" evidence="1">
    <location>
        <begin position="583"/>
        <end position="603"/>
    </location>
</feature>
<feature type="transmembrane region" description="Helical" evidence="1">
    <location>
        <begin position="614"/>
        <end position="634"/>
    </location>
</feature>
<feature type="region of interest" description="Disordered" evidence="2">
    <location>
        <begin position="1"/>
        <end position="35"/>
    </location>
</feature>
<feature type="region of interest" description="Disordered" evidence="2">
    <location>
        <begin position="48"/>
        <end position="106"/>
    </location>
</feature>
<feature type="compositionally biased region" description="Low complexity" evidence="2">
    <location>
        <begin position="58"/>
        <end position="70"/>
    </location>
</feature>
<feature type="compositionally biased region" description="Polar residues" evidence="2">
    <location>
        <begin position="83"/>
        <end position="106"/>
    </location>
</feature>
<feature type="modified residue" description="Phosphoserine" evidence="3">
    <location>
        <position position="28"/>
    </location>
</feature>
<comment type="subcellular location">
    <subcellularLocation>
        <location evidence="4">Membrane</location>
        <topology evidence="4">Multi-pass membrane protein</topology>
    </subcellularLocation>
</comment>
<protein>
    <recommendedName>
        <fullName>Uncharacterized membrane protein C14C4.07</fullName>
    </recommendedName>
</protein>
<accession>O13714</accession>
<organism>
    <name type="scientific">Schizosaccharomyces pombe (strain 972 / ATCC 24843)</name>
    <name type="common">Fission yeast</name>
    <dbReference type="NCBI Taxonomy" id="284812"/>
    <lineage>
        <taxon>Eukaryota</taxon>
        <taxon>Fungi</taxon>
        <taxon>Dikarya</taxon>
        <taxon>Ascomycota</taxon>
        <taxon>Taphrinomycotina</taxon>
        <taxon>Schizosaccharomycetes</taxon>
        <taxon>Schizosaccharomycetales</taxon>
        <taxon>Schizosaccharomycetaceae</taxon>
        <taxon>Schizosaccharomyces</taxon>
    </lineage>
</organism>
<gene>
    <name type="ORF">SPAC14C4.07</name>
</gene>
<keyword id="KW-0472">Membrane</keyword>
<keyword id="KW-0597">Phosphoprotein</keyword>
<keyword id="KW-1185">Reference proteome</keyword>
<keyword id="KW-0812">Transmembrane</keyword>
<keyword id="KW-1133">Transmembrane helix</keyword>
<proteinExistence type="evidence at protein level"/>
<dbReference type="EMBL" id="CU329670">
    <property type="protein sequence ID" value="CAB11200.1"/>
    <property type="molecule type" value="Genomic_DNA"/>
</dbReference>
<dbReference type="PIR" id="T37692">
    <property type="entry name" value="T37692"/>
</dbReference>
<dbReference type="RefSeq" id="NP_594912.1">
    <property type="nucleotide sequence ID" value="NM_001020344.2"/>
</dbReference>
<dbReference type="SMR" id="O13714"/>
<dbReference type="BioGRID" id="278046">
    <property type="interactions" value="3"/>
</dbReference>
<dbReference type="FunCoup" id="O13714">
    <property type="interactions" value="30"/>
</dbReference>
<dbReference type="STRING" id="284812.O13714"/>
<dbReference type="iPTMnet" id="O13714"/>
<dbReference type="PaxDb" id="4896-SPAC14C4.07.1"/>
<dbReference type="EnsemblFungi" id="SPAC14C4.07.1">
    <property type="protein sequence ID" value="SPAC14C4.07.1:pep"/>
    <property type="gene ID" value="SPAC14C4.07"/>
</dbReference>
<dbReference type="KEGG" id="spo:2541546"/>
<dbReference type="PomBase" id="SPAC14C4.07"/>
<dbReference type="VEuPathDB" id="FungiDB:SPAC14C4.07"/>
<dbReference type="eggNOG" id="KOG2816">
    <property type="taxonomic scope" value="Eukaryota"/>
</dbReference>
<dbReference type="HOGENOM" id="CLU_456463_0_0_1"/>
<dbReference type="InParanoid" id="O13714"/>
<dbReference type="OMA" id="PCVQSIA"/>
<dbReference type="Reactome" id="R-SPO-196757">
    <property type="pathway name" value="Metabolism of folate and pterines"/>
</dbReference>
<dbReference type="Reactome" id="R-SPO-917937">
    <property type="pathway name" value="Iron uptake and transport"/>
</dbReference>
<dbReference type="Reactome" id="R-SPO-9707616">
    <property type="pathway name" value="Heme signaling"/>
</dbReference>
<dbReference type="PRO" id="PR:O13714"/>
<dbReference type="Proteomes" id="UP000002485">
    <property type="component" value="Chromosome I"/>
</dbReference>
<dbReference type="GO" id="GO:0000329">
    <property type="term" value="C:fungal-type vacuole membrane"/>
    <property type="evidence" value="ECO:0007005"/>
    <property type="project" value="PomBase"/>
</dbReference>
<dbReference type="GO" id="GO:0005794">
    <property type="term" value="C:Golgi apparatus"/>
    <property type="evidence" value="ECO:0007005"/>
    <property type="project" value="PomBase"/>
</dbReference>
<dbReference type="GO" id="GO:0016020">
    <property type="term" value="C:membrane"/>
    <property type="evidence" value="ECO:0000318"/>
    <property type="project" value="GO_Central"/>
</dbReference>
<dbReference type="GO" id="GO:0022857">
    <property type="term" value="F:transmembrane transporter activity"/>
    <property type="evidence" value="ECO:0000318"/>
    <property type="project" value="GO_Central"/>
</dbReference>
<dbReference type="GO" id="GO:0055085">
    <property type="term" value="P:transmembrane transport"/>
    <property type="evidence" value="ECO:0000318"/>
    <property type="project" value="GO_Central"/>
</dbReference>
<dbReference type="Gene3D" id="1.20.1250.20">
    <property type="entry name" value="MFS general substrate transporter like domains"/>
    <property type="match status" value="1"/>
</dbReference>
<dbReference type="InterPro" id="IPR011701">
    <property type="entry name" value="MFS"/>
</dbReference>
<dbReference type="InterPro" id="IPR036259">
    <property type="entry name" value="MFS_trans_sf"/>
</dbReference>
<dbReference type="PANTHER" id="PTHR23507:SF1">
    <property type="entry name" value="FI18259P1-RELATED"/>
    <property type="match status" value="1"/>
</dbReference>
<dbReference type="PANTHER" id="PTHR23507">
    <property type="entry name" value="ZGC:174356"/>
    <property type="match status" value="1"/>
</dbReference>
<dbReference type="Pfam" id="PF07690">
    <property type="entry name" value="MFS_1"/>
    <property type="match status" value="1"/>
</dbReference>
<dbReference type="SUPFAM" id="SSF103473">
    <property type="entry name" value="MFS general substrate transporter"/>
    <property type="match status" value="2"/>
</dbReference>
<reference key="1">
    <citation type="journal article" date="2002" name="Nature">
        <title>The genome sequence of Schizosaccharomyces pombe.</title>
        <authorList>
            <person name="Wood V."/>
            <person name="Gwilliam R."/>
            <person name="Rajandream M.A."/>
            <person name="Lyne M.H."/>
            <person name="Lyne R."/>
            <person name="Stewart A."/>
            <person name="Sgouros J.G."/>
            <person name="Peat N."/>
            <person name="Hayles J."/>
            <person name="Baker S.G."/>
            <person name="Basham D."/>
            <person name="Bowman S."/>
            <person name="Brooks K."/>
            <person name="Brown D."/>
            <person name="Brown S."/>
            <person name="Chillingworth T."/>
            <person name="Churcher C.M."/>
            <person name="Collins M."/>
            <person name="Connor R."/>
            <person name="Cronin A."/>
            <person name="Davis P."/>
            <person name="Feltwell T."/>
            <person name="Fraser A."/>
            <person name="Gentles S."/>
            <person name="Goble A."/>
            <person name="Hamlin N."/>
            <person name="Harris D.E."/>
            <person name="Hidalgo J."/>
            <person name="Hodgson G."/>
            <person name="Holroyd S."/>
            <person name="Hornsby T."/>
            <person name="Howarth S."/>
            <person name="Huckle E.J."/>
            <person name="Hunt S."/>
            <person name="Jagels K."/>
            <person name="James K.D."/>
            <person name="Jones L."/>
            <person name="Jones M."/>
            <person name="Leather S."/>
            <person name="McDonald S."/>
            <person name="McLean J."/>
            <person name="Mooney P."/>
            <person name="Moule S."/>
            <person name="Mungall K.L."/>
            <person name="Murphy L.D."/>
            <person name="Niblett D."/>
            <person name="Odell C."/>
            <person name="Oliver K."/>
            <person name="O'Neil S."/>
            <person name="Pearson D."/>
            <person name="Quail M.A."/>
            <person name="Rabbinowitsch E."/>
            <person name="Rutherford K.M."/>
            <person name="Rutter S."/>
            <person name="Saunders D."/>
            <person name="Seeger K."/>
            <person name="Sharp S."/>
            <person name="Skelton J."/>
            <person name="Simmonds M.N."/>
            <person name="Squares R."/>
            <person name="Squares S."/>
            <person name="Stevens K."/>
            <person name="Taylor K."/>
            <person name="Taylor R.G."/>
            <person name="Tivey A."/>
            <person name="Walsh S.V."/>
            <person name="Warren T."/>
            <person name="Whitehead S."/>
            <person name="Woodward J.R."/>
            <person name="Volckaert G."/>
            <person name="Aert R."/>
            <person name="Robben J."/>
            <person name="Grymonprez B."/>
            <person name="Weltjens I."/>
            <person name="Vanstreels E."/>
            <person name="Rieger M."/>
            <person name="Schaefer M."/>
            <person name="Mueller-Auer S."/>
            <person name="Gabel C."/>
            <person name="Fuchs M."/>
            <person name="Duesterhoeft A."/>
            <person name="Fritzc C."/>
            <person name="Holzer E."/>
            <person name="Moestl D."/>
            <person name="Hilbert H."/>
            <person name="Borzym K."/>
            <person name="Langer I."/>
            <person name="Beck A."/>
            <person name="Lehrach H."/>
            <person name="Reinhardt R."/>
            <person name="Pohl T.M."/>
            <person name="Eger P."/>
            <person name="Zimmermann W."/>
            <person name="Wedler H."/>
            <person name="Wambutt R."/>
            <person name="Purnelle B."/>
            <person name="Goffeau A."/>
            <person name="Cadieu E."/>
            <person name="Dreano S."/>
            <person name="Gloux S."/>
            <person name="Lelaure V."/>
            <person name="Mottier S."/>
            <person name="Galibert F."/>
            <person name="Aves S.J."/>
            <person name="Xiang Z."/>
            <person name="Hunt C."/>
            <person name="Moore K."/>
            <person name="Hurst S.M."/>
            <person name="Lucas M."/>
            <person name="Rochet M."/>
            <person name="Gaillardin C."/>
            <person name="Tallada V.A."/>
            <person name="Garzon A."/>
            <person name="Thode G."/>
            <person name="Daga R.R."/>
            <person name="Cruzado L."/>
            <person name="Jimenez J."/>
            <person name="Sanchez M."/>
            <person name="del Rey F."/>
            <person name="Benito J."/>
            <person name="Dominguez A."/>
            <person name="Revuelta J.L."/>
            <person name="Moreno S."/>
            <person name="Armstrong J."/>
            <person name="Forsburg S.L."/>
            <person name="Cerutti L."/>
            <person name="Lowe T."/>
            <person name="McCombie W.R."/>
            <person name="Paulsen I."/>
            <person name="Potashkin J."/>
            <person name="Shpakovski G.V."/>
            <person name="Ussery D."/>
            <person name="Barrell B.G."/>
            <person name="Nurse P."/>
        </authorList>
    </citation>
    <scope>NUCLEOTIDE SEQUENCE [LARGE SCALE GENOMIC DNA]</scope>
    <source>
        <strain>972 / ATCC 24843</strain>
    </source>
</reference>
<reference key="2">
    <citation type="journal article" date="2008" name="J. Proteome Res.">
        <title>Phosphoproteome analysis of fission yeast.</title>
        <authorList>
            <person name="Wilson-Grady J.T."/>
            <person name="Villen J."/>
            <person name="Gygi S.P."/>
        </authorList>
    </citation>
    <scope>PHOSPHORYLATION [LARGE SCALE ANALYSIS] AT SER-28</scope>
    <scope>IDENTIFICATION BY MASS SPECTROMETRY</scope>
</reference>
<sequence length="644" mass="71755">MSSHDDDHTPLLISDPSVNKPFRSRTPSPEREYCSDCPLQAKGSACNGNSHSLKHETNGASSSNNNVAKSSSHDSFKAKPKNYDSTSNSNEPISFNEPDSSNSHHNNESICNNDNCCREIARRRSLSPLLILPLNFINAFSWGMIEIPLLFLLRQELCAIHYNLDPTQLSPDDPICRLAEITTGVSKVRAAFGSLAAFLGLFSTAYYGTMGDIYGRRLVLFITVSFLLLGDLWLLYQSYAPKHPYFVLFAAALKGLGGYISTVVASQNSFVADCSKTEFRAWYLGLNFAAYHLGTALGPSLSGFIVQYTPHMYYVFYITSTFWIIYLLYVWLILPESLDVSESKEQQNKISGFSSIWRSCLEPLIILWPRSLCTEESCEFHQYDINADTHAGRRHWDVLLAAILISLTLLGAGSMGLLPLYTDYKFGWGPMKASLILSTDSFASSITLVALFPLLSKVIEKIIEKLYSSEGLFEDPSRADNTSSLQGIRNVFSYLVRPGYSRSSILRGRTADEKYTIVKRDVWNAQLGYAIALSAAVLLAVAKSDVALFTAVIIQAISNMVVPCVQSIALNGVQSEYNGRVLAAFAVFEAVALIIRGPIYAFVYTESMKVSYPNMIFFLSAVIYGCCFIIIFFMRLYRPLNRKR</sequence>
<name>YDZ7_SCHPO</name>